<keyword id="KW-0472">Membrane</keyword>
<keyword id="KW-0602">Photosynthesis</keyword>
<keyword id="KW-0604">Photosystem II</keyword>
<keyword id="KW-0674">Reaction center</keyword>
<keyword id="KW-1185">Reference proteome</keyword>
<keyword id="KW-0793">Thylakoid</keyword>
<keyword id="KW-0812">Transmembrane</keyword>
<keyword id="KW-1133">Transmembrane helix</keyword>
<gene>
    <name evidence="1" type="primary">psbM</name>
    <name type="ordered locus">SynWH7803_0520</name>
</gene>
<dbReference type="EMBL" id="CT971583">
    <property type="protein sequence ID" value="CAK22946.1"/>
    <property type="molecule type" value="Genomic_DNA"/>
</dbReference>
<dbReference type="SMR" id="A5GJ31"/>
<dbReference type="STRING" id="32051.SynWH7803_0520"/>
<dbReference type="KEGG" id="syx:SynWH7803_0520"/>
<dbReference type="eggNOG" id="ENOG50339PB">
    <property type="taxonomic scope" value="Bacteria"/>
</dbReference>
<dbReference type="HOGENOM" id="CLU_215415_0_0_3"/>
<dbReference type="OrthoDB" id="532820at2"/>
<dbReference type="Proteomes" id="UP000001566">
    <property type="component" value="Chromosome"/>
</dbReference>
<dbReference type="GO" id="GO:0009523">
    <property type="term" value="C:photosystem II"/>
    <property type="evidence" value="ECO:0007669"/>
    <property type="project" value="UniProtKB-KW"/>
</dbReference>
<dbReference type="GO" id="GO:0031676">
    <property type="term" value="C:plasma membrane-derived thylakoid membrane"/>
    <property type="evidence" value="ECO:0007669"/>
    <property type="project" value="UniProtKB-SubCell"/>
</dbReference>
<dbReference type="GO" id="GO:0019684">
    <property type="term" value="P:photosynthesis, light reaction"/>
    <property type="evidence" value="ECO:0007669"/>
    <property type="project" value="InterPro"/>
</dbReference>
<dbReference type="HAMAP" id="MF_00438">
    <property type="entry name" value="PSII_PsbM"/>
    <property type="match status" value="1"/>
</dbReference>
<dbReference type="InterPro" id="IPR007826">
    <property type="entry name" value="PSII_PsbM"/>
</dbReference>
<dbReference type="InterPro" id="IPR037269">
    <property type="entry name" value="PSII_PsbM_sf"/>
</dbReference>
<dbReference type="NCBIfam" id="TIGR03038">
    <property type="entry name" value="PS_II_psbM"/>
    <property type="match status" value="1"/>
</dbReference>
<dbReference type="Pfam" id="PF05151">
    <property type="entry name" value="PsbM"/>
    <property type="match status" value="1"/>
</dbReference>
<dbReference type="SUPFAM" id="SSF161033">
    <property type="entry name" value="Photosystem II reaction center protein M, PsbM"/>
    <property type="match status" value="1"/>
</dbReference>
<accession>A5GJ31</accession>
<evidence type="ECO:0000255" key="1">
    <source>
        <dbReference type="HAMAP-Rule" id="MF_00438"/>
    </source>
</evidence>
<feature type="chain" id="PRO_1000025962" description="Photosystem II reaction center protein M">
    <location>
        <begin position="1"/>
        <end position="34"/>
    </location>
</feature>
<feature type="transmembrane region" description="Helical" evidence="1">
    <location>
        <begin position="7"/>
        <end position="27"/>
    </location>
</feature>
<organism>
    <name type="scientific">Synechococcus sp. (strain WH7803)</name>
    <dbReference type="NCBI Taxonomy" id="32051"/>
    <lineage>
        <taxon>Bacteria</taxon>
        <taxon>Bacillati</taxon>
        <taxon>Cyanobacteriota</taxon>
        <taxon>Cyanophyceae</taxon>
        <taxon>Synechococcales</taxon>
        <taxon>Synechococcaceae</taxon>
        <taxon>Synechococcus</taxon>
    </lineage>
</organism>
<proteinExistence type="inferred from homology"/>
<name>PSBM_SYNPW</name>
<comment type="function">
    <text evidence="1">One of the components of the core complex of photosystem II (PSII). PSII is a light-driven water:plastoquinone oxidoreductase that uses light energy to abstract electrons from H(2)O, generating O(2) and a proton gradient subsequently used for ATP formation. It consists of a core antenna complex that captures photons, and an electron transfer chain that converts photonic excitation into a charge separation. This subunit is found at the monomer-monomer interface.</text>
</comment>
<comment type="subunit">
    <text evidence="1">PSII is composed of 1 copy each of membrane proteins PsbA, PsbB, PsbC, PsbD, PsbE, PsbF, PsbH, PsbI, PsbJ, PsbK, PsbL, PsbM, PsbT, PsbX, PsbY, PsbZ, Psb30/Ycf12, peripheral proteins PsbO, CyanoQ (PsbQ), PsbU, PsbV and a large number of cofactors. It forms dimeric complexes.</text>
</comment>
<comment type="subcellular location">
    <subcellularLocation>
        <location evidence="1">Cellular thylakoid membrane</location>
        <topology evidence="1">Single-pass membrane protein</topology>
    </subcellularLocation>
</comment>
<comment type="similarity">
    <text evidence="1">Belongs to the PsbM family.</text>
</comment>
<protein>
    <recommendedName>
        <fullName evidence="1">Photosystem II reaction center protein M</fullName>
        <shortName evidence="1">PSII-M</shortName>
    </recommendedName>
</protein>
<reference key="1">
    <citation type="submission" date="2006-05" db="EMBL/GenBank/DDBJ databases">
        <authorList>
            <consortium name="Genoscope"/>
        </authorList>
    </citation>
    <scope>NUCLEOTIDE SEQUENCE [LARGE SCALE GENOMIC DNA]</scope>
    <source>
        <strain>WH7803</strain>
    </source>
</reference>
<sequence>METNDLGFVASLLFVLVPTVFLIILFIQTNSKEG</sequence>